<reference key="1">
    <citation type="journal article" date="1993" name="Yeast">
        <title>Identification of two divergently transcribed genes centromere-proximal to the ARG4 locus on chromosome VIII of Saccharomyces cerevisiae.</title>
        <authorList>
            <person name="Rocco V."/>
            <person name="Daly M.J."/>
            <person name="Matre V."/>
            <person name="Lichten M."/>
            <person name="Nicolas A."/>
        </authorList>
    </citation>
    <scope>NUCLEOTIDE SEQUENCE [GENOMIC DNA]</scope>
    <scope>INDUCTION</scope>
</reference>
<reference key="2">
    <citation type="journal article" date="1994" name="Science">
        <title>Complete nucleotide sequence of Saccharomyces cerevisiae chromosome VIII.</title>
        <authorList>
            <person name="Johnston M."/>
            <person name="Andrews S."/>
            <person name="Brinkman R."/>
            <person name="Cooper J."/>
            <person name="Ding H."/>
            <person name="Dover J."/>
            <person name="Du Z."/>
            <person name="Favello A."/>
            <person name="Fulton L."/>
            <person name="Gattung S."/>
            <person name="Geisel C."/>
            <person name="Kirsten J."/>
            <person name="Kucaba T."/>
            <person name="Hillier L.W."/>
            <person name="Jier M."/>
            <person name="Johnston L."/>
            <person name="Langston Y."/>
            <person name="Latreille P."/>
            <person name="Louis E.J."/>
            <person name="Macri C."/>
            <person name="Mardis E."/>
            <person name="Menezes S."/>
            <person name="Mouser L."/>
            <person name="Nhan M."/>
            <person name="Rifkin L."/>
            <person name="Riles L."/>
            <person name="St Peter H."/>
            <person name="Trevaskis E."/>
            <person name="Vaughan K."/>
            <person name="Vignati D."/>
            <person name="Wilcox L."/>
            <person name="Wohldman P."/>
            <person name="Waterston R."/>
            <person name="Wilson R."/>
            <person name="Vaudin M."/>
        </authorList>
    </citation>
    <scope>NUCLEOTIDE SEQUENCE [LARGE SCALE GENOMIC DNA]</scope>
    <source>
        <strain>ATCC 204508 / S288c</strain>
    </source>
</reference>
<reference key="3">
    <citation type="journal article" date="2014" name="G3 (Bethesda)">
        <title>The reference genome sequence of Saccharomyces cerevisiae: Then and now.</title>
        <authorList>
            <person name="Engel S.R."/>
            <person name="Dietrich F.S."/>
            <person name="Fisk D.G."/>
            <person name="Binkley G."/>
            <person name="Balakrishnan R."/>
            <person name="Costanzo M.C."/>
            <person name="Dwight S.S."/>
            <person name="Hitz B.C."/>
            <person name="Karra K."/>
            <person name="Nash R.S."/>
            <person name="Weng S."/>
            <person name="Wong E.D."/>
            <person name="Lloyd P."/>
            <person name="Skrzypek M.S."/>
            <person name="Miyasato S.R."/>
            <person name="Simison M."/>
            <person name="Cherry J.M."/>
        </authorList>
    </citation>
    <scope>GENOME REANNOTATION</scope>
    <source>
        <strain>ATCC 204508 / S288c</strain>
    </source>
</reference>
<reference key="4">
    <citation type="journal article" date="1999" name="Mol. Biol. Cell">
        <title>The Saccharomyces cerevisiae homologue of human Wiskott-Aldrich syndrome protein Las17p interacts with the Arp2/3 complex.</title>
        <authorList>
            <person name="Madania A."/>
            <person name="Dumoulin P."/>
            <person name="Grava S."/>
            <person name="Kitamoto H."/>
            <person name="Scharer-Brodbeck C."/>
            <person name="Soulard A."/>
            <person name="Moreau V."/>
            <person name="Winsor B."/>
        </authorList>
    </citation>
    <scope>INTERACTION WITH LAS17</scope>
</reference>
<reference key="5">
    <citation type="journal article" date="2002" name="Mol. Biol. Cell">
        <title>Novel proteins linking the actin cytoskeleton to the endocytic machinery in Saccharomyces cerevisiae.</title>
        <authorList>
            <person name="Dewar H."/>
            <person name="Warren D.T."/>
            <person name="Gardiner F.C."/>
            <person name="Gourlay C.G."/>
            <person name="Satish N."/>
            <person name="Richardson M.R."/>
            <person name="Andrews P.D."/>
            <person name="Ayscough K.R."/>
        </authorList>
    </citation>
    <scope>FUNCTION</scope>
    <scope>INTERACTION WITH SLA1</scope>
    <scope>SUBCELLULAR LOCATION</scope>
</reference>
<reference key="6">
    <citation type="journal article" date="2007" name="J. Proteome Res.">
        <title>Large-scale phosphorylation analysis of alpha-factor-arrested Saccharomyces cerevisiae.</title>
        <authorList>
            <person name="Li X."/>
            <person name="Gerber S.A."/>
            <person name="Rudner A.D."/>
            <person name="Beausoleil S.A."/>
            <person name="Haas W."/>
            <person name="Villen J."/>
            <person name="Elias J.E."/>
            <person name="Gygi S.P."/>
        </authorList>
    </citation>
    <scope>PHOSPHORYLATION [LARGE SCALE ANALYSIS] AT SER-301</scope>
    <scope>IDENTIFICATION BY MASS SPECTROMETRY [LARGE SCALE ANALYSIS]</scope>
    <source>
        <strain>ADR376</strain>
    </source>
</reference>
<reference key="7">
    <citation type="journal article" date="2008" name="Mol. Cell. Proteomics">
        <title>A multidimensional chromatography technology for in-depth phosphoproteome analysis.</title>
        <authorList>
            <person name="Albuquerque C.P."/>
            <person name="Smolka M.B."/>
            <person name="Payne S.H."/>
            <person name="Bafna V."/>
            <person name="Eng J."/>
            <person name="Zhou H."/>
        </authorList>
    </citation>
    <scope>PHOSPHORYLATION [LARGE SCALE ANALYSIS] AT SER-301 AND SER-311</scope>
    <scope>IDENTIFICATION BY MASS SPECTROMETRY [LARGE SCALE ANALYSIS]</scope>
</reference>
<reference key="8">
    <citation type="journal article" date="2009" name="Science">
        <title>Global analysis of Cdk1 substrate phosphorylation sites provides insights into evolution.</title>
        <authorList>
            <person name="Holt L.J."/>
            <person name="Tuch B.B."/>
            <person name="Villen J."/>
            <person name="Johnson A.D."/>
            <person name="Gygi S.P."/>
            <person name="Morgan D.O."/>
        </authorList>
    </citation>
    <scope>PHOSPHORYLATION [LARGE SCALE ANALYSIS] AT SER-301 AND SER-311</scope>
    <scope>IDENTIFICATION BY MASS SPECTROMETRY [LARGE SCALE ANALYSIS]</scope>
</reference>
<dbReference type="EMBL" id="U10400">
    <property type="protein sequence ID" value="AAB68945.1"/>
    <property type="molecule type" value="Genomic_DNA"/>
</dbReference>
<dbReference type="EMBL" id="L06795">
    <property type="protein sequence ID" value="AAA56990.1"/>
    <property type="status" value="ALT_SEQ"/>
    <property type="molecule type" value="Genomic_DNA"/>
</dbReference>
<dbReference type="EMBL" id="BK006934">
    <property type="protein sequence ID" value="DAA06705.1"/>
    <property type="molecule type" value="Genomic_DNA"/>
</dbReference>
<dbReference type="PIR" id="S46791">
    <property type="entry name" value="S46791"/>
</dbReference>
<dbReference type="RefSeq" id="NP_011880.1">
    <property type="nucleotide sequence ID" value="NM_001179146.1"/>
</dbReference>
<dbReference type="PDB" id="2A08">
    <property type="method" value="X-ray"/>
    <property type="resolution" value="1.54 A"/>
    <property type="chains" value="A/B=413-468"/>
</dbReference>
<dbReference type="PDBsum" id="2A08"/>
<dbReference type="SMR" id="P32793"/>
<dbReference type="BioGRID" id="36445">
    <property type="interactions" value="102"/>
</dbReference>
<dbReference type="DIP" id="DIP-2026N"/>
<dbReference type="FunCoup" id="P32793">
    <property type="interactions" value="286"/>
</dbReference>
<dbReference type="IntAct" id="P32793">
    <property type="interactions" value="96"/>
</dbReference>
<dbReference type="MINT" id="P32793"/>
<dbReference type="STRING" id="4932.YHR016C"/>
<dbReference type="iPTMnet" id="P32793"/>
<dbReference type="PaxDb" id="4932-YHR016C"/>
<dbReference type="PeptideAtlas" id="P32793"/>
<dbReference type="EnsemblFungi" id="YHR016C_mRNA">
    <property type="protein sequence ID" value="YHR016C"/>
    <property type="gene ID" value="YHR016C"/>
</dbReference>
<dbReference type="GeneID" id="856409"/>
<dbReference type="KEGG" id="sce:YHR016C"/>
<dbReference type="AGR" id="SGD:S000001058"/>
<dbReference type="SGD" id="S000001058">
    <property type="gene designation" value="YSC84"/>
</dbReference>
<dbReference type="VEuPathDB" id="FungiDB:YHR016C"/>
<dbReference type="eggNOG" id="KOG1843">
    <property type="taxonomic scope" value="Eukaryota"/>
</dbReference>
<dbReference type="GeneTree" id="ENSGT00510000048137"/>
<dbReference type="HOGENOM" id="CLU_015320_2_0_1"/>
<dbReference type="InParanoid" id="P32793"/>
<dbReference type="OMA" id="TQNDWWT"/>
<dbReference type="OrthoDB" id="443981at2759"/>
<dbReference type="BioCyc" id="YEAST:G3O-31078-MONOMER"/>
<dbReference type="BioGRID-ORCS" id="856409">
    <property type="hits" value="10 hits in 10 CRISPR screens"/>
</dbReference>
<dbReference type="EvolutionaryTrace" id="P32793"/>
<dbReference type="PRO" id="PR:P32793"/>
<dbReference type="Proteomes" id="UP000002311">
    <property type="component" value="Chromosome VIII"/>
</dbReference>
<dbReference type="RNAct" id="P32793">
    <property type="molecule type" value="protein"/>
</dbReference>
<dbReference type="GO" id="GO:0030479">
    <property type="term" value="C:actin cortical patch"/>
    <property type="evidence" value="ECO:0000314"/>
    <property type="project" value="SGD"/>
</dbReference>
<dbReference type="GO" id="GO:0005829">
    <property type="term" value="C:cytosol"/>
    <property type="evidence" value="ECO:0007005"/>
    <property type="project" value="SGD"/>
</dbReference>
<dbReference type="GO" id="GO:0051015">
    <property type="term" value="F:actin filament binding"/>
    <property type="evidence" value="ECO:0000314"/>
    <property type="project" value="SGD"/>
</dbReference>
<dbReference type="GO" id="GO:0035091">
    <property type="term" value="F:phosphatidylinositol binding"/>
    <property type="evidence" value="ECO:0000318"/>
    <property type="project" value="GO_Central"/>
</dbReference>
<dbReference type="GO" id="GO:0051666">
    <property type="term" value="P:actin cortical patch localization"/>
    <property type="evidence" value="ECO:0000315"/>
    <property type="project" value="SGD"/>
</dbReference>
<dbReference type="GO" id="GO:0030036">
    <property type="term" value="P:actin cytoskeleton organization"/>
    <property type="evidence" value="ECO:0000316"/>
    <property type="project" value="SGD"/>
</dbReference>
<dbReference type="GO" id="GO:0051017">
    <property type="term" value="P:actin filament bundle assembly"/>
    <property type="evidence" value="ECO:0000314"/>
    <property type="project" value="SGD"/>
</dbReference>
<dbReference type="GO" id="GO:0006897">
    <property type="term" value="P:endocytosis"/>
    <property type="evidence" value="ECO:0000316"/>
    <property type="project" value="SGD"/>
</dbReference>
<dbReference type="CDD" id="cd11842">
    <property type="entry name" value="SH3_Ysc84p_like"/>
    <property type="match status" value="1"/>
</dbReference>
<dbReference type="CDD" id="cd11525">
    <property type="entry name" value="SYLF_SH3YL1_like"/>
    <property type="match status" value="1"/>
</dbReference>
<dbReference type="FunFam" id="2.30.30.40:FF:000100">
    <property type="entry name" value="SH3 domain-containing YSC84-like protein 1"/>
    <property type="match status" value="1"/>
</dbReference>
<dbReference type="Gene3D" id="2.30.30.40">
    <property type="entry name" value="SH3 Domains"/>
    <property type="match status" value="1"/>
</dbReference>
<dbReference type="InterPro" id="IPR036028">
    <property type="entry name" value="SH3-like_dom_sf"/>
</dbReference>
<dbReference type="InterPro" id="IPR001452">
    <property type="entry name" value="SH3_domain"/>
</dbReference>
<dbReference type="InterPro" id="IPR051702">
    <property type="entry name" value="SH3_domain_YSC84-like"/>
</dbReference>
<dbReference type="InterPro" id="IPR033643">
    <property type="entry name" value="SYLF_SH3YL1-like"/>
</dbReference>
<dbReference type="InterPro" id="IPR007461">
    <property type="entry name" value="Ysc84_actin-binding"/>
</dbReference>
<dbReference type="PANTHER" id="PTHR15629:SF2">
    <property type="entry name" value="SH3 DOMAIN-CONTAINING YSC84-LIKE PROTEIN 1"/>
    <property type="match status" value="1"/>
</dbReference>
<dbReference type="PANTHER" id="PTHR15629">
    <property type="entry name" value="SH3YL1 PROTEIN"/>
    <property type="match status" value="1"/>
</dbReference>
<dbReference type="Pfam" id="PF00018">
    <property type="entry name" value="SH3_1"/>
    <property type="match status" value="1"/>
</dbReference>
<dbReference type="Pfam" id="PF04366">
    <property type="entry name" value="Ysc84"/>
    <property type="match status" value="1"/>
</dbReference>
<dbReference type="PRINTS" id="PR00452">
    <property type="entry name" value="SH3DOMAIN"/>
</dbReference>
<dbReference type="PRINTS" id="PR01887">
    <property type="entry name" value="SPECTRNALPHA"/>
</dbReference>
<dbReference type="SMART" id="SM00326">
    <property type="entry name" value="SH3"/>
    <property type="match status" value="1"/>
</dbReference>
<dbReference type="SUPFAM" id="SSF50044">
    <property type="entry name" value="SH3-domain"/>
    <property type="match status" value="1"/>
</dbReference>
<dbReference type="PROSITE" id="PS50002">
    <property type="entry name" value="SH3"/>
    <property type="match status" value="1"/>
</dbReference>
<sequence>MGINNPIPRSLKSETKKAAKVLRSFVKPNQVFGADQVIPPYVLKRAKGLAIITVLKAGFLFSGRAGSGVIVARLKDGTWSAPSAIAMAGAGAGGMVGVELTDFVFILNSEEAVRSFSEFGTITLGGNVSVSAGPLGRSAEAAASASTGGVSAVFAYSKSKGLFAGVSVEGSAILERREANRKFYGDNCTSKMILSGRVKVPPAADPLLRILESRAFNFTRHDHDDNASGDDFYDDGQYSDNTSHYYDDIPDSFDSTDESSTRPNTRSSRRRGMSLGSRSRYDDDYDDDGYGRGRGYGDFDSEDEDYDYGRSPNRNSSRNRGPQIDRGTKPRANTRWEDDLYDRDTEYSRPNHSGRDYDNTRGNRRGYGRERGYSLGHGPTHPSNMSNVDDLSHKMSKTGLGNESTATNSATPTAVALYNFAGEQPGDLAFKKGDVITILKKSDSQNDWWTGRTNGKEGIFPANYVRVS</sequence>
<comment type="function">
    <text evidence="4">Essential for the organization of the actin cytoskeleton, fluid phase endocytosis and vesicle trafficking, together with LSB5.</text>
</comment>
<comment type="subunit">
    <text evidence="3 4">Interacts with LAS17 and SLA1.</text>
</comment>
<comment type="interaction">
    <interactant intactId="EBI-24460">
        <id>P32793</id>
    </interactant>
    <interactant intactId="EBI-2036">
        <id>P15891</id>
        <label>ABP1</label>
    </interactant>
    <organismsDiffer>false</organismsDiffer>
    <experiments>5</experiments>
</comment>
<comment type="interaction">
    <interactant intactId="EBI-24460">
        <id>P32793</id>
    </interactant>
    <interactant intactId="EBI-32973">
        <id>Q12168</id>
        <label>ACF2</label>
    </interactant>
    <organismsDiffer>false</organismsDiffer>
    <experiments>7</experiments>
</comment>
<comment type="interaction">
    <interactant intactId="EBI-24460">
        <id>P32793</id>
    </interactant>
    <interactant intactId="EBI-25556">
        <id>P47129</id>
        <label>ACF4</label>
    </interactant>
    <organismsDiffer>false</organismsDiffer>
    <experiments>4</experiments>
</comment>
<comment type="interaction">
    <interactant intactId="EBI-24460">
        <id>P32793</id>
    </interactant>
    <interactant intactId="EBI-2362">
        <id>P38090</id>
        <label>AGP2</label>
    </interactant>
    <organismsDiffer>false</organismsDiffer>
    <experiments>2</experiments>
</comment>
<comment type="interaction">
    <interactant intactId="EBI-24460">
        <id>P32793</id>
    </interactant>
    <interactant intactId="EBI-21584">
        <id>P38266</id>
        <label>AIM3</label>
    </interactant>
    <organismsDiffer>false</organismsDiffer>
    <experiments>5</experiments>
</comment>
<comment type="interaction">
    <interactant intactId="EBI-24460">
        <id>P32793</id>
    </interactant>
    <interactant intactId="EBI-28798">
        <id>P53933</id>
        <label>APP1</label>
    </interactant>
    <organismsDiffer>false</organismsDiffer>
    <experiments>6</experiments>
</comment>
<comment type="interaction">
    <interactant intactId="EBI-24460">
        <id>P32793</id>
    </interactant>
    <interactant intactId="EBI-37047">
        <id>Q06604</id>
        <label>BSP1</label>
    </interactant>
    <organismsDiffer>false</organismsDiffer>
    <experiments>6</experiments>
</comment>
<comment type="interaction">
    <interactant intactId="EBI-24460">
        <id>P32793</id>
    </interactant>
    <interactant intactId="EBI-35343">
        <id>Q12510</id>
        <label>CMR1</label>
    </interactant>
    <organismsDiffer>false</organismsDiffer>
    <experiments>2</experiments>
</comment>
<comment type="interaction">
    <interactant intactId="EBI-24460">
        <id>P32793</id>
    </interactant>
    <interactant intactId="EBI-37580">
        <id>Q08412</id>
        <label>CUE5</label>
    </interactant>
    <organismsDiffer>false</organismsDiffer>
    <experiments>7</experiments>
</comment>
<comment type="interaction">
    <interactant intactId="EBI-24460">
        <id>P32793</id>
    </interactant>
    <interactant intactId="EBI-21048">
        <id>P38140</id>
        <label>ERT1</label>
    </interactant>
    <organismsDiffer>false</organismsDiffer>
    <experiments>4</experiments>
</comment>
<comment type="interaction">
    <interactant intactId="EBI-24460">
        <id>P32793</id>
    </interactant>
    <interactant intactId="EBI-7968">
        <id>P40956</id>
        <label>GTS1</label>
    </interactant>
    <organismsDiffer>false</organismsDiffer>
    <experiments>4</experiments>
</comment>
<comment type="interaction">
    <interactant intactId="EBI-24460">
        <id>P32793</id>
    </interactant>
    <interactant intactId="EBI-27427">
        <id>Q04322</id>
        <label>GYL1</label>
    </interactant>
    <organismsDiffer>false</organismsDiffer>
    <experiments>6</experiments>
</comment>
<comment type="interaction">
    <interactant intactId="EBI-24460">
        <id>P32793</id>
    </interactant>
    <interactant intactId="EBI-38508">
        <id>Q12344</id>
        <label>GYP5</label>
    </interactant>
    <organismsDiffer>false</organismsDiffer>
    <experiments>2</experiments>
</comment>
<comment type="interaction">
    <interactant intactId="EBI-24460">
        <id>P32793</id>
    </interactant>
    <interactant intactId="EBI-23614">
        <id>P40325</id>
        <label>HUA1</label>
    </interactant>
    <organismsDiffer>false</organismsDiffer>
    <experiments>3</experiments>
</comment>
<comment type="interaction">
    <interactant intactId="EBI-24460">
        <id>P32793</id>
    </interactant>
    <interactant intactId="EBI-10022">
        <id>Q12446</id>
        <label>LAS17</label>
    </interactant>
    <organismsDiffer>false</organismsDiffer>
    <experiments>7</experiments>
</comment>
<comment type="interaction">
    <interactant intactId="EBI-24460">
        <id>P32793</id>
    </interactant>
    <interactant intactId="EBI-22980">
        <id>P43603</id>
        <label>LSB3</label>
    </interactant>
    <organismsDiffer>false</organismsDiffer>
    <experiments>4</experiments>
</comment>
<comment type="interaction">
    <interactant intactId="EBI-24460">
        <id>P32793</id>
    </interactant>
    <interactant intactId="EBI-36841">
        <id>Q08229</id>
        <label>NBA1</label>
    </interactant>
    <organismsDiffer>false</organismsDiffer>
    <experiments>2</experiments>
</comment>
<comment type="interaction">
    <interactant intactId="EBI-24460">
        <id>P32793</id>
    </interactant>
    <interactant intactId="EBI-30000">
        <id>Q12164</id>
        <label>POM33</label>
    </interactant>
    <organismsDiffer>false</organismsDiffer>
    <experiments>2</experiments>
</comment>
<comment type="interaction">
    <interactant intactId="EBI-24460">
        <id>P32793</id>
    </interactant>
    <interactant intactId="EBI-14422">
        <id>P33400</id>
        <label>RIM101</label>
    </interactant>
    <organismsDiffer>false</organismsDiffer>
    <experiments>2</experiments>
</comment>
<comment type="interaction">
    <interactant intactId="EBI-24460">
        <id>P32793</id>
    </interactant>
    <interactant intactId="EBI-16896">
        <id>P32855</id>
        <label>SEC8</label>
    </interactant>
    <organismsDiffer>false</organismsDiffer>
    <experiments>4</experiments>
</comment>
<comment type="interaction">
    <interactant intactId="EBI-24460">
        <id>P32793</id>
    </interactant>
    <interactant intactId="EBI-17313">
        <id>P32790</id>
        <label>SLA1</label>
    </interactant>
    <organismsDiffer>false</organismsDiffer>
    <experiments>7</experiments>
</comment>
<comment type="interaction">
    <interactant intactId="EBI-24460">
        <id>P32793</id>
    </interactant>
    <interactant intactId="EBI-411625">
        <id>P25604</id>
        <label>STP22</label>
    </interactant>
    <organismsDiffer>false</organismsDiffer>
    <experiments>2</experiments>
</comment>
<comment type="subcellular location">
    <subcellularLocation>
        <location evidence="4">Cytoplasm</location>
        <location evidence="4">Cytoskeleton</location>
        <location evidence="4">Actin patch</location>
    </subcellularLocation>
    <text>Cortical actin patches.</text>
</comment>
<comment type="induction">
    <text evidence="5">Induced during sporulation.</text>
</comment>
<comment type="similarity">
    <text evidence="6">Belongs to the SH3YL1 family.</text>
</comment>
<comment type="sequence caution" evidence="6">
    <conflict type="erroneous gene model prediction">
        <sequence resource="EMBL-CDS" id="AAA56990"/>
    </conflict>
</comment>
<accession>P32793</accession>
<accession>D3DKW1</accession>
<organism>
    <name type="scientific">Saccharomyces cerevisiae (strain ATCC 204508 / S288c)</name>
    <name type="common">Baker's yeast</name>
    <dbReference type="NCBI Taxonomy" id="559292"/>
    <lineage>
        <taxon>Eukaryota</taxon>
        <taxon>Fungi</taxon>
        <taxon>Dikarya</taxon>
        <taxon>Ascomycota</taxon>
        <taxon>Saccharomycotina</taxon>
        <taxon>Saccharomycetes</taxon>
        <taxon>Saccharomycetales</taxon>
        <taxon>Saccharomycetaceae</taxon>
        <taxon>Saccharomyces</taxon>
    </lineage>
</organism>
<feature type="chain" id="PRO_0000202887" description="Protein YSC84">
    <location>
        <begin position="1"/>
        <end position="468"/>
    </location>
</feature>
<feature type="domain" description="SH3" evidence="1">
    <location>
        <begin position="409"/>
        <end position="468"/>
    </location>
</feature>
<feature type="region of interest" description="Disordered" evidence="2">
    <location>
        <begin position="220"/>
        <end position="386"/>
    </location>
</feature>
<feature type="compositionally biased region" description="Acidic residues" evidence="2">
    <location>
        <begin position="248"/>
        <end position="257"/>
    </location>
</feature>
<feature type="compositionally biased region" description="Low complexity" evidence="2">
    <location>
        <begin position="309"/>
        <end position="322"/>
    </location>
</feature>
<feature type="compositionally biased region" description="Basic and acidic residues" evidence="2">
    <location>
        <begin position="334"/>
        <end position="372"/>
    </location>
</feature>
<feature type="modified residue" description="Phosphoserine" evidence="7 8 9">
    <location>
        <position position="301"/>
    </location>
</feature>
<feature type="modified residue" description="Phosphoserine" evidence="8 9">
    <location>
        <position position="311"/>
    </location>
</feature>
<feature type="strand" evidence="10">
    <location>
        <begin position="413"/>
        <end position="418"/>
    </location>
</feature>
<feature type="strand" evidence="10">
    <location>
        <begin position="435"/>
        <end position="440"/>
    </location>
</feature>
<feature type="strand" evidence="10">
    <location>
        <begin position="447"/>
        <end position="453"/>
    </location>
</feature>
<feature type="strand" evidence="10">
    <location>
        <begin position="456"/>
        <end position="461"/>
    </location>
</feature>
<feature type="helix" evidence="10">
    <location>
        <begin position="462"/>
        <end position="464"/>
    </location>
</feature>
<feature type="strand" evidence="10">
    <location>
        <begin position="465"/>
        <end position="467"/>
    </location>
</feature>
<gene>
    <name type="primary">YSC84</name>
    <name type="synonym">LSB4</name>
    <name type="ordered locus">YHR016C</name>
</gene>
<evidence type="ECO:0000255" key="1">
    <source>
        <dbReference type="PROSITE-ProRule" id="PRU00192"/>
    </source>
</evidence>
<evidence type="ECO:0000256" key="2">
    <source>
        <dbReference type="SAM" id="MobiDB-lite"/>
    </source>
</evidence>
<evidence type="ECO:0000269" key="3">
    <source>
    </source>
</evidence>
<evidence type="ECO:0000269" key="4">
    <source>
    </source>
</evidence>
<evidence type="ECO:0000269" key="5">
    <source>
    </source>
</evidence>
<evidence type="ECO:0000305" key="6"/>
<evidence type="ECO:0007744" key="7">
    <source>
    </source>
</evidence>
<evidence type="ECO:0007744" key="8">
    <source>
    </source>
</evidence>
<evidence type="ECO:0007744" key="9">
    <source>
    </source>
</evidence>
<evidence type="ECO:0007829" key="10">
    <source>
        <dbReference type="PDB" id="2A08"/>
    </source>
</evidence>
<keyword id="KW-0002">3D-structure</keyword>
<keyword id="KW-0963">Cytoplasm</keyword>
<keyword id="KW-0206">Cytoskeleton</keyword>
<keyword id="KW-0597">Phosphoprotein</keyword>
<keyword id="KW-1185">Reference proteome</keyword>
<keyword id="KW-0728">SH3 domain</keyword>
<name>YSC84_YEAST</name>
<proteinExistence type="evidence at protein level"/>
<protein>
    <recommendedName>
        <fullName>Protein YSC84</fullName>
    </recommendedName>
    <alternativeName>
        <fullName>LAS seventeen-binding protein 4</fullName>
        <shortName>LAS17-binding protein 4</shortName>
    </alternativeName>
</protein>